<evidence type="ECO:0000255" key="1">
    <source>
        <dbReference type="HAMAP-Rule" id="MF_01865"/>
    </source>
</evidence>
<evidence type="ECO:0000255" key="2">
    <source>
        <dbReference type="PROSITE-ProRule" id="PRU01266"/>
    </source>
</evidence>
<feature type="chain" id="PRO_0000375047" description="Ribosomal protein uS12 methylthiotransferase RimO">
    <location>
        <begin position="1"/>
        <end position="425"/>
    </location>
</feature>
<feature type="domain" description="MTTase N-terminal" evidence="1">
    <location>
        <begin position="2"/>
        <end position="115"/>
    </location>
</feature>
<feature type="domain" description="Radical SAM core" evidence="2">
    <location>
        <begin position="128"/>
        <end position="357"/>
    </location>
</feature>
<feature type="domain" description="TRAM" evidence="1">
    <location>
        <begin position="360"/>
        <end position="425"/>
    </location>
</feature>
<feature type="binding site" evidence="1">
    <location>
        <position position="11"/>
    </location>
    <ligand>
        <name>[4Fe-4S] cluster</name>
        <dbReference type="ChEBI" id="CHEBI:49883"/>
        <label>1</label>
    </ligand>
</feature>
<feature type="binding site" evidence="1">
    <location>
        <position position="47"/>
    </location>
    <ligand>
        <name>[4Fe-4S] cluster</name>
        <dbReference type="ChEBI" id="CHEBI:49883"/>
        <label>1</label>
    </ligand>
</feature>
<feature type="binding site" evidence="1">
    <location>
        <position position="78"/>
    </location>
    <ligand>
        <name>[4Fe-4S] cluster</name>
        <dbReference type="ChEBI" id="CHEBI:49883"/>
        <label>1</label>
    </ligand>
</feature>
<feature type="binding site" evidence="1">
    <location>
        <position position="142"/>
    </location>
    <ligand>
        <name>[4Fe-4S] cluster</name>
        <dbReference type="ChEBI" id="CHEBI:49883"/>
        <label>2</label>
        <note>4Fe-4S-S-AdoMet</note>
    </ligand>
</feature>
<feature type="binding site" evidence="1">
    <location>
        <position position="146"/>
    </location>
    <ligand>
        <name>[4Fe-4S] cluster</name>
        <dbReference type="ChEBI" id="CHEBI:49883"/>
        <label>2</label>
        <note>4Fe-4S-S-AdoMet</note>
    </ligand>
</feature>
<feature type="binding site" evidence="1">
    <location>
        <position position="149"/>
    </location>
    <ligand>
        <name>[4Fe-4S] cluster</name>
        <dbReference type="ChEBI" id="CHEBI:49883"/>
        <label>2</label>
        <note>4Fe-4S-S-AdoMet</note>
    </ligand>
</feature>
<comment type="function">
    <text evidence="1">Catalyzes the methylthiolation of an aspartic acid residue of ribosomal protein uS12.</text>
</comment>
<comment type="catalytic activity">
    <reaction evidence="1">
        <text>L-aspartate(89)-[ribosomal protein uS12]-hydrogen + (sulfur carrier)-SH + AH2 + 2 S-adenosyl-L-methionine = 3-methylsulfanyl-L-aspartate(89)-[ribosomal protein uS12]-hydrogen + (sulfur carrier)-H + 5'-deoxyadenosine + L-methionine + A + S-adenosyl-L-homocysteine + 2 H(+)</text>
        <dbReference type="Rhea" id="RHEA:37087"/>
        <dbReference type="Rhea" id="RHEA-COMP:10460"/>
        <dbReference type="Rhea" id="RHEA-COMP:10461"/>
        <dbReference type="Rhea" id="RHEA-COMP:14737"/>
        <dbReference type="Rhea" id="RHEA-COMP:14739"/>
        <dbReference type="ChEBI" id="CHEBI:13193"/>
        <dbReference type="ChEBI" id="CHEBI:15378"/>
        <dbReference type="ChEBI" id="CHEBI:17319"/>
        <dbReference type="ChEBI" id="CHEBI:17499"/>
        <dbReference type="ChEBI" id="CHEBI:29917"/>
        <dbReference type="ChEBI" id="CHEBI:29961"/>
        <dbReference type="ChEBI" id="CHEBI:57844"/>
        <dbReference type="ChEBI" id="CHEBI:57856"/>
        <dbReference type="ChEBI" id="CHEBI:59789"/>
        <dbReference type="ChEBI" id="CHEBI:64428"/>
        <dbReference type="ChEBI" id="CHEBI:73599"/>
        <dbReference type="EC" id="2.8.4.4"/>
    </reaction>
</comment>
<comment type="cofactor">
    <cofactor evidence="1">
        <name>[4Fe-4S] cluster</name>
        <dbReference type="ChEBI" id="CHEBI:49883"/>
    </cofactor>
    <text evidence="1">Binds 2 [4Fe-4S] clusters. One cluster is coordinated with 3 cysteines and an exchangeable S-adenosyl-L-methionine.</text>
</comment>
<comment type="subcellular location">
    <subcellularLocation>
        <location evidence="1">Cytoplasm</location>
    </subcellularLocation>
</comment>
<comment type="similarity">
    <text evidence="1">Belongs to the methylthiotransferase family. RimO subfamily.</text>
</comment>
<dbReference type="EC" id="2.8.4.4" evidence="1"/>
<dbReference type="EMBL" id="CP001147">
    <property type="protein sequence ID" value="ACI21769.1"/>
    <property type="molecule type" value="Genomic_DNA"/>
</dbReference>
<dbReference type="RefSeq" id="WP_012546475.1">
    <property type="nucleotide sequence ID" value="NC_011296.1"/>
</dbReference>
<dbReference type="RefSeq" id="YP_002248696.1">
    <property type="nucleotide sequence ID" value="NC_011296.1"/>
</dbReference>
<dbReference type="SMR" id="B5YKD1"/>
<dbReference type="FunCoup" id="B5YKD1">
    <property type="interactions" value="345"/>
</dbReference>
<dbReference type="STRING" id="289376.THEYE_A0857"/>
<dbReference type="EnsemblBacteria" id="ACI21769">
    <property type="protein sequence ID" value="ACI21769"/>
    <property type="gene ID" value="THEYE_A0857"/>
</dbReference>
<dbReference type="KEGG" id="tye:THEYE_A0857"/>
<dbReference type="PATRIC" id="fig|289376.4.peg.845"/>
<dbReference type="eggNOG" id="COG0621">
    <property type="taxonomic scope" value="Bacteria"/>
</dbReference>
<dbReference type="HOGENOM" id="CLU_018697_0_1_0"/>
<dbReference type="InParanoid" id="B5YKD1"/>
<dbReference type="OrthoDB" id="9805215at2"/>
<dbReference type="Proteomes" id="UP000000718">
    <property type="component" value="Chromosome"/>
</dbReference>
<dbReference type="GO" id="GO:0005829">
    <property type="term" value="C:cytosol"/>
    <property type="evidence" value="ECO:0000318"/>
    <property type="project" value="GO_Central"/>
</dbReference>
<dbReference type="GO" id="GO:0051539">
    <property type="term" value="F:4 iron, 4 sulfur cluster binding"/>
    <property type="evidence" value="ECO:0000318"/>
    <property type="project" value="GO_Central"/>
</dbReference>
<dbReference type="GO" id="GO:0035599">
    <property type="term" value="F:aspartic acid methylthiotransferase activity"/>
    <property type="evidence" value="ECO:0000318"/>
    <property type="project" value="GO_Central"/>
</dbReference>
<dbReference type="GO" id="GO:0046872">
    <property type="term" value="F:metal ion binding"/>
    <property type="evidence" value="ECO:0007669"/>
    <property type="project" value="UniProtKB-KW"/>
</dbReference>
<dbReference type="GO" id="GO:0103039">
    <property type="term" value="F:protein methylthiotransferase activity"/>
    <property type="evidence" value="ECO:0007669"/>
    <property type="project" value="UniProtKB-EC"/>
</dbReference>
<dbReference type="GO" id="GO:0006400">
    <property type="term" value="P:tRNA modification"/>
    <property type="evidence" value="ECO:0007669"/>
    <property type="project" value="InterPro"/>
</dbReference>
<dbReference type="CDD" id="cd01335">
    <property type="entry name" value="Radical_SAM"/>
    <property type="match status" value="1"/>
</dbReference>
<dbReference type="FunFam" id="3.80.30.20:FF:000001">
    <property type="entry name" value="tRNA-2-methylthio-N(6)-dimethylallyladenosine synthase 2"/>
    <property type="match status" value="1"/>
</dbReference>
<dbReference type="Gene3D" id="3.40.50.12160">
    <property type="entry name" value="Methylthiotransferase, N-terminal domain"/>
    <property type="match status" value="1"/>
</dbReference>
<dbReference type="Gene3D" id="2.40.50.140">
    <property type="entry name" value="Nucleic acid-binding proteins"/>
    <property type="match status" value="1"/>
</dbReference>
<dbReference type="Gene3D" id="3.80.30.20">
    <property type="entry name" value="tm_1862 like domain"/>
    <property type="match status" value="1"/>
</dbReference>
<dbReference type="HAMAP" id="MF_01865">
    <property type="entry name" value="MTTase_RimO"/>
    <property type="match status" value="1"/>
</dbReference>
<dbReference type="InterPro" id="IPR006638">
    <property type="entry name" value="Elp3/MiaA/NifB-like_rSAM"/>
</dbReference>
<dbReference type="InterPro" id="IPR005839">
    <property type="entry name" value="Methylthiotransferase"/>
</dbReference>
<dbReference type="InterPro" id="IPR020612">
    <property type="entry name" value="Methylthiotransferase_CS"/>
</dbReference>
<dbReference type="InterPro" id="IPR013848">
    <property type="entry name" value="Methylthiotransferase_N"/>
</dbReference>
<dbReference type="InterPro" id="IPR038135">
    <property type="entry name" value="Methylthiotransferase_N_sf"/>
</dbReference>
<dbReference type="InterPro" id="IPR012340">
    <property type="entry name" value="NA-bd_OB-fold"/>
</dbReference>
<dbReference type="InterPro" id="IPR005840">
    <property type="entry name" value="Ribosomal_uS12_MeSTrfase_RimO"/>
</dbReference>
<dbReference type="InterPro" id="IPR007197">
    <property type="entry name" value="rSAM"/>
</dbReference>
<dbReference type="InterPro" id="IPR023404">
    <property type="entry name" value="rSAM_horseshoe"/>
</dbReference>
<dbReference type="InterPro" id="IPR002792">
    <property type="entry name" value="TRAM_dom"/>
</dbReference>
<dbReference type="NCBIfam" id="TIGR01125">
    <property type="entry name" value="30S ribosomal protein S12 methylthiotransferase RimO"/>
    <property type="match status" value="1"/>
</dbReference>
<dbReference type="NCBIfam" id="TIGR00089">
    <property type="entry name" value="MiaB/RimO family radical SAM methylthiotransferase"/>
    <property type="match status" value="1"/>
</dbReference>
<dbReference type="PANTHER" id="PTHR43837">
    <property type="entry name" value="RIBOSOMAL PROTEIN S12 METHYLTHIOTRANSFERASE RIMO"/>
    <property type="match status" value="1"/>
</dbReference>
<dbReference type="PANTHER" id="PTHR43837:SF1">
    <property type="entry name" value="RIBOSOMAL PROTEIN US12 METHYLTHIOTRANSFERASE RIMO"/>
    <property type="match status" value="1"/>
</dbReference>
<dbReference type="Pfam" id="PF04055">
    <property type="entry name" value="Radical_SAM"/>
    <property type="match status" value="1"/>
</dbReference>
<dbReference type="Pfam" id="PF18693">
    <property type="entry name" value="TRAM_2"/>
    <property type="match status" value="1"/>
</dbReference>
<dbReference type="Pfam" id="PF00919">
    <property type="entry name" value="UPF0004"/>
    <property type="match status" value="1"/>
</dbReference>
<dbReference type="SFLD" id="SFLDG01082">
    <property type="entry name" value="B12-binding_domain_containing"/>
    <property type="match status" value="1"/>
</dbReference>
<dbReference type="SFLD" id="SFLDG01061">
    <property type="entry name" value="methylthiotransferase"/>
    <property type="match status" value="1"/>
</dbReference>
<dbReference type="SFLD" id="SFLDF00274">
    <property type="entry name" value="ribosomal_protein_S12_methylth"/>
    <property type="match status" value="1"/>
</dbReference>
<dbReference type="SMART" id="SM00729">
    <property type="entry name" value="Elp3"/>
    <property type="match status" value="1"/>
</dbReference>
<dbReference type="SUPFAM" id="SSF102114">
    <property type="entry name" value="Radical SAM enzymes"/>
    <property type="match status" value="1"/>
</dbReference>
<dbReference type="PROSITE" id="PS51449">
    <property type="entry name" value="MTTASE_N"/>
    <property type="match status" value="1"/>
</dbReference>
<dbReference type="PROSITE" id="PS01278">
    <property type="entry name" value="MTTASE_RADICAL"/>
    <property type="match status" value="1"/>
</dbReference>
<dbReference type="PROSITE" id="PS51918">
    <property type="entry name" value="RADICAL_SAM"/>
    <property type="match status" value="1"/>
</dbReference>
<dbReference type="PROSITE" id="PS50926">
    <property type="entry name" value="TRAM"/>
    <property type="match status" value="1"/>
</dbReference>
<proteinExistence type="inferred from homology"/>
<accession>B5YKD1</accession>
<name>RIMO_THEYD</name>
<keyword id="KW-0004">4Fe-4S</keyword>
<keyword id="KW-0963">Cytoplasm</keyword>
<keyword id="KW-0408">Iron</keyword>
<keyword id="KW-0411">Iron-sulfur</keyword>
<keyword id="KW-0479">Metal-binding</keyword>
<keyword id="KW-1185">Reference proteome</keyword>
<keyword id="KW-0949">S-adenosyl-L-methionine</keyword>
<keyword id="KW-0808">Transferase</keyword>
<reference key="1">
    <citation type="submission" date="2008-08" db="EMBL/GenBank/DDBJ databases">
        <title>The complete genome sequence of Thermodesulfovibrio yellowstonii strain ATCC 51303 / DSM 11347 / YP87.</title>
        <authorList>
            <person name="Dodson R.J."/>
            <person name="Durkin A.S."/>
            <person name="Wu M."/>
            <person name="Eisen J."/>
            <person name="Sutton G."/>
        </authorList>
    </citation>
    <scope>NUCLEOTIDE SEQUENCE [LARGE SCALE GENOMIC DNA]</scope>
    <source>
        <strain>ATCC 51303 / DSM 11347 / YP87</strain>
    </source>
</reference>
<sequence length="425" mass="49257">MKNFTVITLGCPKNTVDSRHLIDALTKEGFYYVEEFKKADFVFINTCCFINDAKEESIDEILTAAKFKIDRKLIVFGCLSKRYGKELEKEIPEIDAVFGVDEKDKIIDYIKQFSKNSNFISQNFQYTVEPPSYRYIKIAEGCSRRCSFCIIPDVRGPFRSLNPEEILKEVENFVHSGIKEFILVAQDITQYGKDLKGYTLKRLLKDLCSIKGDFWIRLLYLYPSDIDENLIETIADEEKIVKYLDIPMQHSEERILRLMGRRGTKKEYLKKIKQIRQAIPEVTLRSTFIVGFPTETEEEFQRLVDFIEEVQFDRLGVFKYSKEEGTKAYSLKGQIPENVKNRRYNEIMARQAVISLEKNRALIGKKYEALIDYIDADIAIARLYCHAPEIDGVVILENTADLKAGEKVTILITEGYEYDVKGVIV</sequence>
<protein>
    <recommendedName>
        <fullName evidence="1">Ribosomal protein uS12 methylthiotransferase RimO</fullName>
        <shortName evidence="1">uS12 MTTase</shortName>
        <shortName evidence="1">uS12 methylthiotransferase</shortName>
        <ecNumber evidence="1">2.8.4.4</ecNumber>
    </recommendedName>
    <alternativeName>
        <fullName evidence="1">Ribosomal protein uS12 (aspartate-C(3))-methylthiotransferase</fullName>
    </alternativeName>
    <alternativeName>
        <fullName evidence="1">Ribosome maturation factor RimO</fullName>
    </alternativeName>
</protein>
<gene>
    <name evidence="1" type="primary">rimO</name>
    <name type="ordered locus">THEYE_A0857</name>
</gene>
<organism>
    <name type="scientific">Thermodesulfovibrio yellowstonii (strain ATCC 51303 / DSM 11347 / YP87)</name>
    <dbReference type="NCBI Taxonomy" id="289376"/>
    <lineage>
        <taxon>Bacteria</taxon>
        <taxon>Pseudomonadati</taxon>
        <taxon>Nitrospirota</taxon>
        <taxon>Thermodesulfovibrionia</taxon>
        <taxon>Thermodesulfovibrionales</taxon>
        <taxon>Thermodesulfovibrionaceae</taxon>
        <taxon>Thermodesulfovibrio</taxon>
    </lineage>
</organism>